<reference key="1">
    <citation type="journal article" date="1991" name="Mol. Biochem. Parasitol.">
        <title>Structure and transcription of a P-ATPase gene from Trypanosoma brucei.</title>
        <authorList>
            <person name="Revelard P."/>
            <person name="Pays E."/>
        </authorList>
    </citation>
    <scope>NUCLEOTIDE SEQUENCE [GENOMIC DNA]</scope>
</reference>
<keyword id="KW-0067">ATP-binding</keyword>
<keyword id="KW-0106">Calcium</keyword>
<keyword id="KW-0109">Calcium transport</keyword>
<keyword id="KW-1003">Cell membrane</keyword>
<keyword id="KW-0406">Ion transport</keyword>
<keyword id="KW-0460">Magnesium</keyword>
<keyword id="KW-0472">Membrane</keyword>
<keyword id="KW-0547">Nucleotide-binding</keyword>
<keyword id="KW-0597">Phosphoprotein</keyword>
<keyword id="KW-1278">Translocase</keyword>
<keyword id="KW-0812">Transmembrane</keyword>
<keyword id="KW-1133">Transmembrane helix</keyword>
<keyword id="KW-0813">Transport</keyword>
<sequence length="1011" mass="110314">MLPENLPTDPAAMTPAAVAAALRVDTKVGLSSNEVEERRQAFGINELPSEPPTPFWKLVLAQFEDTLVRILLLAATVSFAMAVVENNAADFVEPFIILLILILNATVGVWQENRAEGAIEALKSFVPKTAVVLRDGDIKTVNAEELVPGDVVEVAVGNRVPADMRVVELHSTTLRADQSILNGESVEAMKQIEAVKGRQERFPACMVYSGTAIVYGKALCVVVRTGASTEIGTIERDVREQEEVKTPLQVKLDEFGVLLSKVIGYICLVVFAVNLVRWYATHKPTKNETFFTRYIQPSVHCLKVAVALAVAAIPEGLPAVVTTCLALGTRRMAQHNALVRDLPSVETLGRCTVICSDKTGTLTTNMMSVLHAFTLKGDGSIKEYELKDSRFNIVSNSVTCEGRQVSSPLEQDGALTKLANIAVLCNDASLHHNAATVQVEKIGEATEAALLVMSEKFANIKGDSAVNAFRTLCEGKWKKNATLEFTRKRKSMSVHVTSTVTGSPASSTNNLFVKGAPEEVLRRSTHVMQDNGAVVQLSATHRKRIIEQLDKISGGANALRCIGFAFKPTKAVQHVRLNDPATFEDVESDLTFVGACGMLDPPREEVRDAIVKCRTAGIRVVVITGDRKETAEAICCKLGLLSSTADTTGLSYTGQELDAMTPAQKREAVLTAVLFSRTDPSHKMQLVQLLKDERLICAMTGDGVNDAPALKKADIGIAMGSGTEVAKSASKMVLADDNFATVVKAVQEGRAIYNNTKQFIRYLISSNIGEVVCILVTGLFGLPEALSPVQLLWVNLVTDGLPATALGFNAPDRDIMEQRPRRMEEPIVNGWLFMRYMVIGVYVGLATVGGFLWWFLRHGFSWHDLTTYTACSDMTNGTCLLLANPQTARAIALSILVVVEMLNALNALSENASLIVSRPSSNVWLLFAIFSSLSLHLIIMYVPFFAKLFNIVPLGVDPHVVQQAQPWSILTPTNFDDWKAVIVFSVPVIFLDELLKFITRRMEKAQEKKKD</sequence>
<protein>
    <recommendedName>
        <fullName>Probable calcium-transporting ATPase</fullName>
        <ecNumber>7.2.2.10</ecNumber>
    </recommendedName>
    <alternativeName>
        <fullName>Calcium pump</fullName>
    </alternativeName>
</protein>
<gene>
    <name type="primary">TBA1</name>
</gene>
<accession>P35315</accession>
<feature type="chain" id="PRO_0000046228" description="Probable calcium-transporting ATPase">
    <location>
        <begin position="1"/>
        <end position="1011"/>
    </location>
</feature>
<feature type="topological domain" description="Cytoplasmic" evidence="2">
    <location>
        <begin position="1"/>
        <end position="65"/>
    </location>
</feature>
<feature type="transmembrane region" description="Helical" evidence="2">
    <location>
        <begin position="66"/>
        <end position="84"/>
    </location>
</feature>
<feature type="topological domain" description="Extracellular" evidence="2">
    <location>
        <begin position="85"/>
        <end position="90"/>
    </location>
</feature>
<feature type="transmembrane region" description="Helical" evidence="2">
    <location>
        <begin position="91"/>
        <end position="110"/>
    </location>
</feature>
<feature type="topological domain" description="Cytoplasmic" evidence="2">
    <location>
        <begin position="111"/>
        <end position="258"/>
    </location>
</feature>
<feature type="transmembrane region" description="Helical" evidence="2">
    <location>
        <begin position="259"/>
        <end position="278"/>
    </location>
</feature>
<feature type="topological domain" description="Extracellular" evidence="2">
    <location>
        <begin position="279"/>
        <end position="303"/>
    </location>
</feature>
<feature type="transmembrane region" description="Helical" evidence="2">
    <location>
        <begin position="304"/>
        <end position="321"/>
    </location>
</feature>
<feature type="topological domain" description="Cytoplasmic" evidence="2">
    <location>
        <begin position="322"/>
        <end position="770"/>
    </location>
</feature>
<feature type="transmembrane region" description="Helical" evidence="2">
    <location>
        <begin position="771"/>
        <end position="794"/>
    </location>
</feature>
<feature type="topological domain" description="Extracellular" evidence="2">
    <location>
        <begin position="795"/>
        <end position="835"/>
    </location>
</feature>
<feature type="transmembrane region" description="Helical" evidence="2">
    <location>
        <begin position="836"/>
        <end position="856"/>
    </location>
</feature>
<feature type="topological domain" description="Cytoplasmic" evidence="2">
    <location>
        <begin position="857"/>
        <end position="885"/>
    </location>
</feature>
<feature type="transmembrane region" description="Helical" evidence="2">
    <location>
        <begin position="886"/>
        <end position="905"/>
    </location>
</feature>
<feature type="topological domain" description="Extracellular" evidence="2">
    <location>
        <begin position="906"/>
        <end position="922"/>
    </location>
</feature>
<feature type="transmembrane region" description="Helical" evidence="2">
    <location>
        <begin position="923"/>
        <end position="942"/>
    </location>
</feature>
<feature type="topological domain" description="Cytoplasmic" evidence="2">
    <location>
        <begin position="943"/>
        <end position="1011"/>
    </location>
</feature>
<feature type="active site" description="4-aspartylphosphate intermediate" evidence="1">
    <location>
        <position position="357"/>
    </location>
</feature>
<feature type="binding site" evidence="1">
    <location>
        <position position="514"/>
    </location>
    <ligand>
        <name>ATP</name>
        <dbReference type="ChEBI" id="CHEBI:30616"/>
    </ligand>
</feature>
<proteinExistence type="inferred from homology"/>
<evidence type="ECO:0000250" key="1"/>
<evidence type="ECO:0000255" key="2"/>
<evidence type="ECO:0000305" key="3"/>
<comment type="function">
    <text evidence="1">This magnesium-dependent enzyme catalyzes the hydrolysis of ATP coupled with the transport of the calcium.</text>
</comment>
<comment type="catalytic activity">
    <reaction>
        <text>Ca(2+)(in) + ATP + H2O = Ca(2+)(out) + ADP + phosphate + H(+)</text>
        <dbReference type="Rhea" id="RHEA:18105"/>
        <dbReference type="ChEBI" id="CHEBI:15377"/>
        <dbReference type="ChEBI" id="CHEBI:15378"/>
        <dbReference type="ChEBI" id="CHEBI:29108"/>
        <dbReference type="ChEBI" id="CHEBI:30616"/>
        <dbReference type="ChEBI" id="CHEBI:43474"/>
        <dbReference type="ChEBI" id="CHEBI:456216"/>
        <dbReference type="EC" id="7.2.2.10"/>
    </reaction>
</comment>
<comment type="subcellular location">
    <subcellularLocation>
        <location>Flagellar pocket</location>
    </subcellularLocation>
    <subcellularLocation>
        <location>Cell membrane</location>
        <topology>Multi-pass membrane protein</topology>
    </subcellularLocation>
    <text>May be located in the flagellar pocket of the membrane.</text>
</comment>
<comment type="similarity">
    <text evidence="3">Belongs to the cation transport ATPase (P-type) (TC 3.A.3) family.</text>
</comment>
<name>ATC_TRYBB</name>
<organism>
    <name type="scientific">Trypanosoma brucei brucei</name>
    <dbReference type="NCBI Taxonomy" id="5702"/>
    <lineage>
        <taxon>Eukaryota</taxon>
        <taxon>Discoba</taxon>
        <taxon>Euglenozoa</taxon>
        <taxon>Kinetoplastea</taxon>
        <taxon>Metakinetoplastina</taxon>
        <taxon>Trypanosomatida</taxon>
        <taxon>Trypanosomatidae</taxon>
        <taxon>Trypanosoma</taxon>
    </lineage>
</organism>
<dbReference type="EC" id="7.2.2.10"/>
<dbReference type="EMBL" id="M73769">
    <property type="protein sequence ID" value="AAA30227.1"/>
    <property type="molecule type" value="Genomic_DNA"/>
</dbReference>
<dbReference type="SMR" id="P35315"/>
<dbReference type="GO" id="GO:0020016">
    <property type="term" value="C:ciliary pocket"/>
    <property type="evidence" value="ECO:0007669"/>
    <property type="project" value="UniProtKB-SubCell"/>
</dbReference>
<dbReference type="GO" id="GO:0005886">
    <property type="term" value="C:plasma membrane"/>
    <property type="evidence" value="ECO:0007669"/>
    <property type="project" value="UniProtKB-SubCell"/>
</dbReference>
<dbReference type="GO" id="GO:0005524">
    <property type="term" value="F:ATP binding"/>
    <property type="evidence" value="ECO:0007669"/>
    <property type="project" value="UniProtKB-KW"/>
</dbReference>
<dbReference type="GO" id="GO:0016887">
    <property type="term" value="F:ATP hydrolysis activity"/>
    <property type="evidence" value="ECO:0007669"/>
    <property type="project" value="InterPro"/>
</dbReference>
<dbReference type="GO" id="GO:0005388">
    <property type="term" value="F:P-type calcium transporter activity"/>
    <property type="evidence" value="ECO:0007669"/>
    <property type="project" value="UniProtKB-EC"/>
</dbReference>
<dbReference type="FunFam" id="3.40.1110.10:FF:000003">
    <property type="entry name" value="Calcium-transporting ATPase"/>
    <property type="match status" value="1"/>
</dbReference>
<dbReference type="FunFam" id="1.20.1110.10:FF:000065">
    <property type="entry name" value="Sarcoplasmic/endoplasmic reticulum calcium ATPase 1"/>
    <property type="match status" value="2"/>
</dbReference>
<dbReference type="FunFam" id="2.70.150.10:FF:000160">
    <property type="entry name" value="Sarcoplasmic/endoplasmic reticulum calcium ATPase 1"/>
    <property type="match status" value="1"/>
</dbReference>
<dbReference type="FunFam" id="3.40.50.1000:FF:000083">
    <property type="entry name" value="Sodium/potassium-transporting ATPase subunit alpha"/>
    <property type="match status" value="1"/>
</dbReference>
<dbReference type="Gene3D" id="3.40.1110.10">
    <property type="entry name" value="Calcium-transporting ATPase, cytoplasmic domain N"/>
    <property type="match status" value="1"/>
</dbReference>
<dbReference type="Gene3D" id="2.70.150.10">
    <property type="entry name" value="Calcium-transporting ATPase, cytoplasmic transduction domain A"/>
    <property type="match status" value="1"/>
</dbReference>
<dbReference type="Gene3D" id="1.20.1110.10">
    <property type="entry name" value="Calcium-transporting ATPase, transmembrane domain"/>
    <property type="match status" value="1"/>
</dbReference>
<dbReference type="Gene3D" id="3.40.50.1000">
    <property type="entry name" value="HAD superfamily/HAD-like"/>
    <property type="match status" value="1"/>
</dbReference>
<dbReference type="InterPro" id="IPR006068">
    <property type="entry name" value="ATPase_P-typ_cation-transptr_C"/>
</dbReference>
<dbReference type="InterPro" id="IPR004014">
    <property type="entry name" value="ATPase_P-typ_cation-transptr_N"/>
</dbReference>
<dbReference type="InterPro" id="IPR023299">
    <property type="entry name" value="ATPase_P-typ_cyto_dom_N"/>
</dbReference>
<dbReference type="InterPro" id="IPR018303">
    <property type="entry name" value="ATPase_P-typ_P_site"/>
</dbReference>
<dbReference type="InterPro" id="IPR023298">
    <property type="entry name" value="ATPase_P-typ_TM_dom_sf"/>
</dbReference>
<dbReference type="InterPro" id="IPR008250">
    <property type="entry name" value="ATPase_P-typ_transduc_dom_A_sf"/>
</dbReference>
<dbReference type="InterPro" id="IPR036412">
    <property type="entry name" value="HAD-like_sf"/>
</dbReference>
<dbReference type="InterPro" id="IPR023214">
    <property type="entry name" value="HAD_sf"/>
</dbReference>
<dbReference type="InterPro" id="IPR005782">
    <property type="entry name" value="P-type_ATPase_IIA"/>
</dbReference>
<dbReference type="InterPro" id="IPR001757">
    <property type="entry name" value="P_typ_ATPase"/>
</dbReference>
<dbReference type="InterPro" id="IPR044492">
    <property type="entry name" value="P_typ_ATPase_HD_dom"/>
</dbReference>
<dbReference type="NCBIfam" id="TIGR01116">
    <property type="entry name" value="ATPase-IIA1_Ca"/>
    <property type="match status" value="1"/>
</dbReference>
<dbReference type="NCBIfam" id="TIGR01494">
    <property type="entry name" value="ATPase_P-type"/>
    <property type="match status" value="2"/>
</dbReference>
<dbReference type="PANTHER" id="PTHR42861">
    <property type="entry name" value="CALCIUM-TRANSPORTING ATPASE"/>
    <property type="match status" value="1"/>
</dbReference>
<dbReference type="Pfam" id="PF13246">
    <property type="entry name" value="Cation_ATPase"/>
    <property type="match status" value="1"/>
</dbReference>
<dbReference type="Pfam" id="PF00689">
    <property type="entry name" value="Cation_ATPase_C"/>
    <property type="match status" value="1"/>
</dbReference>
<dbReference type="Pfam" id="PF00690">
    <property type="entry name" value="Cation_ATPase_N"/>
    <property type="match status" value="1"/>
</dbReference>
<dbReference type="Pfam" id="PF00122">
    <property type="entry name" value="E1-E2_ATPase"/>
    <property type="match status" value="1"/>
</dbReference>
<dbReference type="Pfam" id="PF00702">
    <property type="entry name" value="Hydrolase"/>
    <property type="match status" value="1"/>
</dbReference>
<dbReference type="PRINTS" id="PR00119">
    <property type="entry name" value="CATATPASE"/>
</dbReference>
<dbReference type="SFLD" id="SFLDG00002">
    <property type="entry name" value="C1.7:_P-type_atpase_like"/>
    <property type="match status" value="1"/>
</dbReference>
<dbReference type="SFLD" id="SFLDF00027">
    <property type="entry name" value="p-type_atpase"/>
    <property type="match status" value="1"/>
</dbReference>
<dbReference type="SMART" id="SM00831">
    <property type="entry name" value="Cation_ATPase_N"/>
    <property type="match status" value="1"/>
</dbReference>
<dbReference type="SUPFAM" id="SSF81653">
    <property type="entry name" value="Calcium ATPase, transduction domain A"/>
    <property type="match status" value="1"/>
</dbReference>
<dbReference type="SUPFAM" id="SSF81665">
    <property type="entry name" value="Calcium ATPase, transmembrane domain M"/>
    <property type="match status" value="1"/>
</dbReference>
<dbReference type="SUPFAM" id="SSF56784">
    <property type="entry name" value="HAD-like"/>
    <property type="match status" value="1"/>
</dbReference>
<dbReference type="SUPFAM" id="SSF81660">
    <property type="entry name" value="Metal cation-transporting ATPase, ATP-binding domain N"/>
    <property type="match status" value="1"/>
</dbReference>
<dbReference type="PROSITE" id="PS00154">
    <property type="entry name" value="ATPASE_E1_E2"/>
    <property type="match status" value="1"/>
</dbReference>